<accession>Q04KY8</accession>
<gene>
    <name evidence="1" type="primary">yabA</name>
    <name type="ordered locus">SPD_0827</name>
</gene>
<keyword id="KW-0963">Cytoplasm</keyword>
<keyword id="KW-0235">DNA replication</keyword>
<keyword id="KW-0236">DNA replication inhibitor</keyword>
<keyword id="KW-0479">Metal-binding</keyword>
<keyword id="KW-1185">Reference proteome</keyword>
<keyword id="KW-0862">Zinc</keyword>
<name>YABA_STRP2</name>
<feature type="chain" id="PRO_1000065586" description="Replication initiation control protein YabA">
    <location>
        <begin position="1"/>
        <end position="105"/>
    </location>
</feature>
<feature type="binding site" evidence="1">
    <location>
        <position position="79"/>
    </location>
    <ligand>
        <name>Zn(2+)</name>
        <dbReference type="ChEBI" id="CHEBI:29105"/>
    </ligand>
</feature>
<feature type="binding site" evidence="1">
    <location>
        <position position="81"/>
    </location>
    <ligand>
        <name>Zn(2+)</name>
        <dbReference type="ChEBI" id="CHEBI:29105"/>
    </ligand>
</feature>
<feature type="binding site" evidence="1">
    <location>
        <position position="95"/>
    </location>
    <ligand>
        <name>Zn(2+)</name>
        <dbReference type="ChEBI" id="CHEBI:29105"/>
    </ligand>
</feature>
<feature type="binding site" evidence="1">
    <location>
        <position position="98"/>
    </location>
    <ligand>
        <name>Zn(2+)</name>
        <dbReference type="ChEBI" id="CHEBI:29105"/>
    </ligand>
</feature>
<feature type="mutagenesis site" description="Rescues DNA replication initiation defect of ccrZ deletion mutant." evidence="2">
    <location>
        <begin position="94"/>
        <end position="105"/>
    </location>
</feature>
<evidence type="ECO:0000255" key="1">
    <source>
        <dbReference type="HAMAP-Rule" id="MF_01159"/>
    </source>
</evidence>
<evidence type="ECO:0000269" key="2">
    <source>
    </source>
</evidence>
<evidence type="ECO:0000303" key="3">
    <source>
    </source>
</evidence>
<reference key="1">
    <citation type="journal article" date="2007" name="J. Bacteriol.">
        <title>Genome sequence of Avery's virulent serotype 2 strain D39 of Streptococcus pneumoniae and comparison with that of unencapsulated laboratory strain R6.</title>
        <authorList>
            <person name="Lanie J.A."/>
            <person name="Ng W.-L."/>
            <person name="Kazmierczak K.M."/>
            <person name="Andrzejewski T.M."/>
            <person name="Davidsen T.M."/>
            <person name="Wayne K.J."/>
            <person name="Tettelin H."/>
            <person name="Glass J.I."/>
            <person name="Winkler M.E."/>
        </authorList>
    </citation>
    <scope>NUCLEOTIDE SEQUENCE [LARGE SCALE GENOMIC DNA]</scope>
    <source>
        <strain>D39 / NCTC 7466</strain>
    </source>
</reference>
<reference key="2">
    <citation type="journal article" date="2021" name="Nat. Microbiol.">
        <title>CcrZ is a pneumococcal spatiotemporal cell cycle regulator that interacts with FtsZ and controls DNA replication by modulating the activity of DnaA.</title>
        <authorList>
            <person name="Gallay C."/>
            <person name="Sanselicio S."/>
            <person name="Anderson M.E."/>
            <person name="Soh Y.M."/>
            <person name="Liu X."/>
            <person name="Stamsaas G.A."/>
            <person name="Pelliciari S."/>
            <person name="van Raaphorst R."/>
            <person name="Denereaz J."/>
            <person name="Kjos M."/>
            <person name="Murray H."/>
            <person name="Gruber S."/>
            <person name="Grossman A.D."/>
            <person name="Veening J.W."/>
        </authorList>
    </citation>
    <scope>FUNCTION</scope>
    <scope>DISRUPTION PHENOTYPE</scope>
    <scope>MUTAGENESIS OF 94-GLU--GLU-105</scope>
    <source>
        <strain evidence="3">D39V / serotype 2</strain>
    </source>
</reference>
<comment type="function">
    <text evidence="1 2">Involved in control of chromosome replication initiation (PubMed:34373624). Inhibits the cooperative binding of DnaA to the oriC region, thus negatively regulating initiation of chromosome replication. Inhibits the ability of DnaA-ATP to form a helix on DNA; does not disassemble preformed DnaA-DNA helices. Decreases the residence time of DnaA on the chromosome at its binding sites (oriC, replication forks and promoter-binding sites). Tethers DnaA to the replication machinery via the DNA polymerase beta sliding clamp subunit (dnaN). Associates with oriC and other DnaA targets on the chromosome in a DnaA-dependent manner.</text>
</comment>
<comment type="cofactor">
    <cofactor evidence="1">
        <name>Zn(2+)</name>
        <dbReference type="ChEBI" id="CHEBI:29105"/>
    </cofactor>
    <text evidence="1">Binds 1 zinc ion per subunit.</text>
</comment>
<comment type="subunit">
    <text evidence="1">Homotetramer. Interacts with both DnaA and DnaN, acting as a bridge between these two proteins.</text>
</comment>
<comment type="subcellular location">
    <subcellularLocation>
        <location evidence="1">Cytoplasm</location>
        <location evidence="1">Nucleoid</location>
    </subcellularLocation>
    <text evidence="1">Localizes in tight foci, which correspond to the replisome at mid-cell throughout the cell cycle.</text>
</comment>
<comment type="disruption phenotype">
    <text evidence="2">Increased DNA replication initiation rate. Reduced growth rate.</text>
</comment>
<comment type="similarity">
    <text evidence="1">Belongs to the YabA family.</text>
</comment>
<protein>
    <recommendedName>
        <fullName evidence="1">Replication initiation control protein YabA</fullName>
    </recommendedName>
</protein>
<dbReference type="EMBL" id="CP000410">
    <property type="protein sequence ID" value="ABJ54628.1"/>
    <property type="molecule type" value="Genomic_DNA"/>
</dbReference>
<dbReference type="RefSeq" id="WP_000358228.1">
    <property type="nucleotide sequence ID" value="NZ_JAMLJR010000004.1"/>
</dbReference>
<dbReference type="SMR" id="Q04KY8"/>
<dbReference type="PaxDb" id="373153-SPD_0827"/>
<dbReference type="GeneID" id="93739792"/>
<dbReference type="KEGG" id="spd:SPD_0827"/>
<dbReference type="eggNOG" id="COG4467">
    <property type="taxonomic scope" value="Bacteria"/>
</dbReference>
<dbReference type="HOGENOM" id="CLU_157169_0_0_9"/>
<dbReference type="BioCyc" id="SPNE373153:G1G6V-906-MONOMER"/>
<dbReference type="Proteomes" id="UP000001452">
    <property type="component" value="Chromosome"/>
</dbReference>
<dbReference type="GO" id="GO:0009295">
    <property type="term" value="C:nucleoid"/>
    <property type="evidence" value="ECO:0007669"/>
    <property type="project" value="UniProtKB-SubCell"/>
</dbReference>
<dbReference type="GO" id="GO:0006270">
    <property type="term" value="P:DNA replication initiation"/>
    <property type="evidence" value="ECO:0000315"/>
    <property type="project" value="UniProtKB"/>
</dbReference>
<dbReference type="HAMAP" id="MF_01159">
    <property type="entry name" value="YabA"/>
    <property type="match status" value="1"/>
</dbReference>
<dbReference type="InterPro" id="IPR010377">
    <property type="entry name" value="YabA"/>
</dbReference>
<dbReference type="NCBIfam" id="NF009640">
    <property type="entry name" value="PRK13169.1-1"/>
    <property type="match status" value="1"/>
</dbReference>
<dbReference type="Pfam" id="PF06156">
    <property type="entry name" value="YabA"/>
    <property type="match status" value="1"/>
</dbReference>
<dbReference type="PIRSF" id="PIRSF021439">
    <property type="entry name" value="DUF972"/>
    <property type="match status" value="1"/>
</dbReference>
<sequence>MDKKELFDALDDFSQQLLVTLADVEAIKKNLKSLVEENTALRLENSKLRERLGEVEADAPVKAKHVRESVRRIYRDGFHVCNDFYGQRREQDEECMFCDELLYRE</sequence>
<organism>
    <name type="scientific">Streptococcus pneumoniae serotype 2 (strain D39 / NCTC 7466)</name>
    <dbReference type="NCBI Taxonomy" id="373153"/>
    <lineage>
        <taxon>Bacteria</taxon>
        <taxon>Bacillati</taxon>
        <taxon>Bacillota</taxon>
        <taxon>Bacilli</taxon>
        <taxon>Lactobacillales</taxon>
        <taxon>Streptococcaceae</taxon>
        <taxon>Streptococcus</taxon>
    </lineage>
</organism>
<proteinExistence type="evidence at protein level"/>